<sequence>MSELITGQYLSEFINRFQLQLPQPDNVLTHSHYFSATNRRAAVLIPIICRPEPTLLLTRRADHLRKHAGQVAFPGGKADPDDQSLISTALREAEEEVAIPASVVHVLGKLAPLNSSSGYHVTPIVGLVPANIPFYGNDEEVAGLFEIPLHEALSLSRYHSLDIHREGINHRVYLSWYENQFIWGLTATIIRHLAQQVSI</sequence>
<keyword id="KW-0378">Hydrolase</keyword>
<keyword id="KW-0460">Magnesium</keyword>
<keyword id="KW-0464">Manganese</keyword>
<keyword id="KW-0479">Metal-binding</keyword>
<evidence type="ECO:0000255" key="1">
    <source>
        <dbReference type="HAMAP-Rule" id="MF_01592"/>
    </source>
</evidence>
<dbReference type="EC" id="3.6.1.-" evidence="1"/>
<dbReference type="EMBL" id="CP000901">
    <property type="protein sequence ID" value="ABX88497.1"/>
    <property type="molecule type" value="Genomic_DNA"/>
</dbReference>
<dbReference type="RefSeq" id="WP_002211080.1">
    <property type="nucleotide sequence ID" value="NZ_CP009935.1"/>
</dbReference>
<dbReference type="SMR" id="A9R5X2"/>
<dbReference type="KEGG" id="ypg:YpAngola_A1637"/>
<dbReference type="GO" id="GO:0010945">
    <property type="term" value="F:coenzyme A diphosphatase activity"/>
    <property type="evidence" value="ECO:0007669"/>
    <property type="project" value="InterPro"/>
</dbReference>
<dbReference type="GO" id="GO:0000287">
    <property type="term" value="F:magnesium ion binding"/>
    <property type="evidence" value="ECO:0007669"/>
    <property type="project" value="UniProtKB-UniRule"/>
</dbReference>
<dbReference type="GO" id="GO:0030145">
    <property type="term" value="F:manganese ion binding"/>
    <property type="evidence" value="ECO:0007669"/>
    <property type="project" value="UniProtKB-UniRule"/>
</dbReference>
<dbReference type="GO" id="GO:0009132">
    <property type="term" value="P:nucleoside diphosphate metabolic process"/>
    <property type="evidence" value="ECO:0007669"/>
    <property type="project" value="InterPro"/>
</dbReference>
<dbReference type="CDD" id="cd03426">
    <property type="entry name" value="NUDIX_CoAse_Nudt7"/>
    <property type="match status" value="1"/>
</dbReference>
<dbReference type="Gene3D" id="3.90.79.10">
    <property type="entry name" value="Nucleoside Triphosphate Pyrophosphohydrolase"/>
    <property type="match status" value="1"/>
</dbReference>
<dbReference type="HAMAP" id="MF_01592">
    <property type="entry name" value="Nudix_NudL"/>
    <property type="match status" value="1"/>
</dbReference>
<dbReference type="InterPro" id="IPR045121">
    <property type="entry name" value="CoAse"/>
</dbReference>
<dbReference type="InterPro" id="IPR015797">
    <property type="entry name" value="NUDIX_hydrolase-like_dom_sf"/>
</dbReference>
<dbReference type="InterPro" id="IPR000086">
    <property type="entry name" value="NUDIX_hydrolase_dom"/>
</dbReference>
<dbReference type="InterPro" id="IPR000059">
    <property type="entry name" value="NUDIX_hydrolase_NudL_CS"/>
</dbReference>
<dbReference type="InterPro" id="IPR023735">
    <property type="entry name" value="Nudix_NudL"/>
</dbReference>
<dbReference type="NCBIfam" id="NF007980">
    <property type="entry name" value="PRK10707.1"/>
    <property type="match status" value="1"/>
</dbReference>
<dbReference type="PANTHER" id="PTHR12992:SF11">
    <property type="entry name" value="MITOCHONDRIAL COENZYME A DIPHOSPHATASE NUDT8"/>
    <property type="match status" value="1"/>
</dbReference>
<dbReference type="PANTHER" id="PTHR12992">
    <property type="entry name" value="NUDIX HYDROLASE"/>
    <property type="match status" value="1"/>
</dbReference>
<dbReference type="Pfam" id="PF00293">
    <property type="entry name" value="NUDIX"/>
    <property type="match status" value="1"/>
</dbReference>
<dbReference type="SUPFAM" id="SSF55811">
    <property type="entry name" value="Nudix"/>
    <property type="match status" value="1"/>
</dbReference>
<dbReference type="PROSITE" id="PS51462">
    <property type="entry name" value="NUDIX"/>
    <property type="match status" value="1"/>
</dbReference>
<dbReference type="PROSITE" id="PS01293">
    <property type="entry name" value="NUDIX_COA"/>
    <property type="match status" value="1"/>
</dbReference>
<protein>
    <recommendedName>
        <fullName evidence="1">Uncharacterized Nudix hydrolase NudL</fullName>
        <ecNumber evidence="1">3.6.1.-</ecNumber>
    </recommendedName>
</protein>
<reference key="1">
    <citation type="journal article" date="2010" name="J. Bacteriol.">
        <title>Genome sequence of the deep-rooted Yersinia pestis strain Angola reveals new insights into the evolution and pangenome of the plague bacterium.</title>
        <authorList>
            <person name="Eppinger M."/>
            <person name="Worsham P.L."/>
            <person name="Nikolich M.P."/>
            <person name="Riley D.R."/>
            <person name="Sebastian Y."/>
            <person name="Mou S."/>
            <person name="Achtman M."/>
            <person name="Lindler L.E."/>
            <person name="Ravel J."/>
        </authorList>
    </citation>
    <scope>NUCLEOTIDE SEQUENCE [LARGE SCALE GENOMIC DNA]</scope>
    <source>
        <strain>Angola</strain>
    </source>
</reference>
<name>NUDL_YERPG</name>
<feature type="chain" id="PRO_1000147830" description="Uncharacterized Nudix hydrolase NudL">
    <location>
        <begin position="1"/>
        <end position="199"/>
    </location>
</feature>
<feature type="domain" description="Nudix hydrolase" evidence="1">
    <location>
        <begin position="38"/>
        <end position="169"/>
    </location>
</feature>
<feature type="short sequence motif" description="Nudix box">
    <location>
        <begin position="76"/>
        <end position="98"/>
    </location>
</feature>
<feature type="binding site" evidence="1">
    <location>
        <position position="92"/>
    </location>
    <ligand>
        <name>Mg(2+)</name>
        <dbReference type="ChEBI" id="CHEBI:18420"/>
    </ligand>
</feature>
<feature type="binding site" evidence="1">
    <location>
        <position position="96"/>
    </location>
    <ligand>
        <name>Mg(2+)</name>
        <dbReference type="ChEBI" id="CHEBI:18420"/>
    </ligand>
</feature>
<proteinExistence type="inferred from homology"/>
<comment type="function">
    <text evidence="1">Probably mediates the hydrolysis of some nucleoside diphosphate derivatives.</text>
</comment>
<comment type="cofactor">
    <cofactor evidence="1">
        <name>Mn(2+)</name>
        <dbReference type="ChEBI" id="CHEBI:29035"/>
    </cofactor>
    <cofactor evidence="1">
        <name>Mg(2+)</name>
        <dbReference type="ChEBI" id="CHEBI:18420"/>
    </cofactor>
</comment>
<comment type="similarity">
    <text evidence="1">Belongs to the Nudix hydrolase family. PCD1 subfamily.</text>
</comment>
<organism>
    <name type="scientific">Yersinia pestis bv. Antiqua (strain Angola)</name>
    <dbReference type="NCBI Taxonomy" id="349746"/>
    <lineage>
        <taxon>Bacteria</taxon>
        <taxon>Pseudomonadati</taxon>
        <taxon>Pseudomonadota</taxon>
        <taxon>Gammaproteobacteria</taxon>
        <taxon>Enterobacterales</taxon>
        <taxon>Yersiniaceae</taxon>
        <taxon>Yersinia</taxon>
    </lineage>
</organism>
<gene>
    <name evidence="1" type="primary">nudL</name>
    <name type="ordered locus">YpAngola_A1637</name>
</gene>
<accession>A9R5X2</accession>